<feature type="chain" id="PRO_0000307772" description="Tetratricopeptide repeat protein 24">
    <location>
        <begin position="1"/>
        <end position="334"/>
    </location>
</feature>
<feature type="repeat" description="TPR 1">
    <location>
        <begin position="35"/>
        <end position="68"/>
    </location>
</feature>
<feature type="repeat" description="TPR 2">
    <location>
        <begin position="72"/>
        <end position="105"/>
    </location>
</feature>
<feature type="repeat" description="TPR 3">
    <location>
        <begin position="112"/>
        <end position="145"/>
    </location>
</feature>
<feature type="repeat" description="TPR 4">
    <location>
        <begin position="152"/>
        <end position="185"/>
    </location>
</feature>
<feature type="region of interest" description="Disordered" evidence="1">
    <location>
        <begin position="220"/>
        <end position="258"/>
    </location>
</feature>
<feature type="compositionally biased region" description="Polar residues" evidence="1">
    <location>
        <begin position="233"/>
        <end position="246"/>
    </location>
</feature>
<feature type="splice variant" id="VSP_028823" description="In isoform 2." evidence="2">
    <original>MLSSRQYGLSDVLRALEESRKLADADRSTDQGLLGPFYNDLGMGYFQLQLFPLAVEAFLQALPLCRQPSEQATVLQNLGMTHNVLGNYWEAQEFHQKAASLHGSVGQRWEQGRSFSGLAFSLSQLGDHRAAWDSYLHALQAAQDTGDVKGQWQACEGLGAAAARLGQHDQALKYYKEALALCQHEPSSVRERLVAKLADAMRTFVAQEKIAQARF</original>
    <variation>MATGWGWCSKKTPGAVS</variation>
    <location>
        <begin position="1"/>
        <end position="215"/>
    </location>
</feature>
<evidence type="ECO:0000256" key="1">
    <source>
        <dbReference type="SAM" id="MobiDB-lite"/>
    </source>
</evidence>
<evidence type="ECO:0000303" key="2">
    <source>
    </source>
</evidence>
<accession>Q8BYG0</accession>
<accession>Q7TPM2</accession>
<protein>
    <recommendedName>
        <fullName>Tetratricopeptide repeat protein 24</fullName>
        <shortName>TPR repeat protein 24</shortName>
    </recommendedName>
</protein>
<proteinExistence type="evidence at transcript level"/>
<gene>
    <name type="primary">Ttc24</name>
</gene>
<organism>
    <name type="scientific">Mus musculus</name>
    <name type="common">Mouse</name>
    <dbReference type="NCBI Taxonomy" id="10090"/>
    <lineage>
        <taxon>Eukaryota</taxon>
        <taxon>Metazoa</taxon>
        <taxon>Chordata</taxon>
        <taxon>Craniata</taxon>
        <taxon>Vertebrata</taxon>
        <taxon>Euteleostomi</taxon>
        <taxon>Mammalia</taxon>
        <taxon>Eutheria</taxon>
        <taxon>Euarchontoglires</taxon>
        <taxon>Glires</taxon>
        <taxon>Rodentia</taxon>
        <taxon>Myomorpha</taxon>
        <taxon>Muroidea</taxon>
        <taxon>Muridae</taxon>
        <taxon>Murinae</taxon>
        <taxon>Mus</taxon>
        <taxon>Mus</taxon>
    </lineage>
</organism>
<sequence length="334" mass="36701">MLSSRQYGLSDVLRALEESRKLADADRSTDQGLLGPFYNDLGMGYFQLQLFPLAVEAFLQALPLCRQPSEQATVLQNLGMTHNVLGNYWEAQEFHQKAASLHGSVGQRWEQGRSFSGLAFSLSQLGDHRAAWDSYLHALQAAQDTGDVKGQWQACEGLGAAAARLGQHDQALKYYKEALALCQHEPSSVRERLVAKLADAMRTFVAQEKIAQARFLPSAPGKLQTSRKAKTSARVQSSAEDAQESQWEGEASEGGHEKKEMEGLVNTATVLGPQRQNRATTHLPSGGPSPSGEEYPFIIAPKKLRVSRSSTWAKEALGRNFQRTRIQSGLCSIM</sequence>
<dbReference type="EMBL" id="AK039884">
    <property type="protein sequence ID" value="BAC30472.1"/>
    <property type="molecule type" value="mRNA"/>
</dbReference>
<dbReference type="EMBL" id="BC055114">
    <property type="protein sequence ID" value="AAH55114.1"/>
    <property type="molecule type" value="mRNA"/>
</dbReference>
<dbReference type="CCDS" id="CCDS17465.1">
    <molecule id="Q8BYG0-1"/>
</dbReference>
<dbReference type="RefSeq" id="NP_766114.1">
    <molecule id="Q8BYG0-1"/>
    <property type="nucleotide sequence ID" value="NM_172526.3"/>
</dbReference>
<dbReference type="SMR" id="Q8BYG0"/>
<dbReference type="STRING" id="10090.ENSMUSP00000061571"/>
<dbReference type="iPTMnet" id="Q8BYG0"/>
<dbReference type="PhosphoSitePlus" id="Q8BYG0"/>
<dbReference type="PaxDb" id="10090-ENSMUSP00000061571"/>
<dbReference type="ProteomicsDB" id="297745">
    <molecule id="Q8BYG0-1"/>
</dbReference>
<dbReference type="ProteomicsDB" id="297746">
    <molecule id="Q8BYG0-2"/>
</dbReference>
<dbReference type="Antibodypedia" id="34219">
    <property type="antibodies" value="33 antibodies from 10 providers"/>
</dbReference>
<dbReference type="DNASU" id="214191"/>
<dbReference type="GeneID" id="214191"/>
<dbReference type="KEGG" id="mmu:214191"/>
<dbReference type="UCSC" id="uc008ptv.1">
    <molecule id="Q8BYG0-2"/>
    <property type="organism name" value="mouse"/>
</dbReference>
<dbReference type="UCSC" id="uc008ptw.1">
    <molecule id="Q8BYG0-1"/>
    <property type="organism name" value="mouse"/>
</dbReference>
<dbReference type="AGR" id="MGI:2443841"/>
<dbReference type="CTD" id="164118"/>
<dbReference type="MGI" id="MGI:2443841">
    <property type="gene designation" value="Ttc24"/>
</dbReference>
<dbReference type="VEuPathDB" id="HostDB:ENSMUSG00000051036"/>
<dbReference type="eggNOG" id="KOG1124">
    <property type="taxonomic scope" value="Eukaryota"/>
</dbReference>
<dbReference type="HOGENOM" id="CLU_033633_0_0_1"/>
<dbReference type="InParanoid" id="Q8BYG0"/>
<dbReference type="OrthoDB" id="53020at9989"/>
<dbReference type="PhylomeDB" id="Q8BYG0"/>
<dbReference type="BioGRID-ORCS" id="214191">
    <property type="hits" value="1 hit in 78 CRISPR screens"/>
</dbReference>
<dbReference type="PRO" id="PR:Q8BYG0"/>
<dbReference type="Proteomes" id="UP000000589">
    <property type="component" value="Chromosome 3"/>
</dbReference>
<dbReference type="RNAct" id="Q8BYG0">
    <property type="molecule type" value="protein"/>
</dbReference>
<dbReference type="Bgee" id="ENSMUSG00000051036">
    <property type="expression patterns" value="Expressed in testis and 7 other cell types or tissues"/>
</dbReference>
<dbReference type="ExpressionAtlas" id="Q8BYG0">
    <property type="expression patterns" value="baseline and differential"/>
</dbReference>
<dbReference type="Gene3D" id="1.25.40.10">
    <property type="entry name" value="Tetratricopeptide repeat domain"/>
    <property type="match status" value="1"/>
</dbReference>
<dbReference type="InterPro" id="IPR011990">
    <property type="entry name" value="TPR-like_helical_dom_sf"/>
</dbReference>
<dbReference type="InterPro" id="IPR013105">
    <property type="entry name" value="TPR_2"/>
</dbReference>
<dbReference type="InterPro" id="IPR024812">
    <property type="entry name" value="TPR_24"/>
</dbReference>
<dbReference type="InterPro" id="IPR019734">
    <property type="entry name" value="TPR_rpt"/>
</dbReference>
<dbReference type="PANTHER" id="PTHR47050">
    <property type="entry name" value="TETRATRICOPEPTIDE REPEAT PROTEIN 24"/>
    <property type="match status" value="1"/>
</dbReference>
<dbReference type="PANTHER" id="PTHR47050:SF2">
    <property type="entry name" value="TETRATRICOPEPTIDE REPEAT PROTEIN 24"/>
    <property type="match status" value="1"/>
</dbReference>
<dbReference type="Pfam" id="PF07719">
    <property type="entry name" value="TPR_2"/>
    <property type="match status" value="1"/>
</dbReference>
<dbReference type="SMART" id="SM00028">
    <property type="entry name" value="TPR"/>
    <property type="match status" value="4"/>
</dbReference>
<dbReference type="SUPFAM" id="SSF48452">
    <property type="entry name" value="TPR-like"/>
    <property type="match status" value="1"/>
</dbReference>
<dbReference type="PROSITE" id="PS50005">
    <property type="entry name" value="TPR"/>
    <property type="match status" value="4"/>
</dbReference>
<dbReference type="PROSITE" id="PS50293">
    <property type="entry name" value="TPR_REGION"/>
    <property type="match status" value="1"/>
</dbReference>
<comment type="alternative products">
    <event type="alternative splicing"/>
    <isoform>
        <id>Q8BYG0-1</id>
        <name>1</name>
        <sequence type="displayed"/>
    </isoform>
    <isoform>
        <id>Q8BYG0-2</id>
        <name>2</name>
        <sequence type="described" ref="VSP_028823"/>
    </isoform>
</comment>
<reference key="1">
    <citation type="journal article" date="2005" name="Science">
        <title>The transcriptional landscape of the mammalian genome.</title>
        <authorList>
            <person name="Carninci P."/>
            <person name="Kasukawa T."/>
            <person name="Katayama S."/>
            <person name="Gough J."/>
            <person name="Frith M.C."/>
            <person name="Maeda N."/>
            <person name="Oyama R."/>
            <person name="Ravasi T."/>
            <person name="Lenhard B."/>
            <person name="Wells C."/>
            <person name="Kodzius R."/>
            <person name="Shimokawa K."/>
            <person name="Bajic V.B."/>
            <person name="Brenner S.E."/>
            <person name="Batalov S."/>
            <person name="Forrest A.R."/>
            <person name="Zavolan M."/>
            <person name="Davis M.J."/>
            <person name="Wilming L.G."/>
            <person name="Aidinis V."/>
            <person name="Allen J.E."/>
            <person name="Ambesi-Impiombato A."/>
            <person name="Apweiler R."/>
            <person name="Aturaliya R.N."/>
            <person name="Bailey T.L."/>
            <person name="Bansal M."/>
            <person name="Baxter L."/>
            <person name="Beisel K.W."/>
            <person name="Bersano T."/>
            <person name="Bono H."/>
            <person name="Chalk A.M."/>
            <person name="Chiu K.P."/>
            <person name="Choudhary V."/>
            <person name="Christoffels A."/>
            <person name="Clutterbuck D.R."/>
            <person name="Crowe M.L."/>
            <person name="Dalla E."/>
            <person name="Dalrymple B.P."/>
            <person name="de Bono B."/>
            <person name="Della Gatta G."/>
            <person name="di Bernardo D."/>
            <person name="Down T."/>
            <person name="Engstrom P."/>
            <person name="Fagiolini M."/>
            <person name="Faulkner G."/>
            <person name="Fletcher C.F."/>
            <person name="Fukushima T."/>
            <person name="Furuno M."/>
            <person name="Futaki S."/>
            <person name="Gariboldi M."/>
            <person name="Georgii-Hemming P."/>
            <person name="Gingeras T.R."/>
            <person name="Gojobori T."/>
            <person name="Green R.E."/>
            <person name="Gustincich S."/>
            <person name="Harbers M."/>
            <person name="Hayashi Y."/>
            <person name="Hensch T.K."/>
            <person name="Hirokawa N."/>
            <person name="Hill D."/>
            <person name="Huminiecki L."/>
            <person name="Iacono M."/>
            <person name="Ikeo K."/>
            <person name="Iwama A."/>
            <person name="Ishikawa T."/>
            <person name="Jakt M."/>
            <person name="Kanapin A."/>
            <person name="Katoh M."/>
            <person name="Kawasawa Y."/>
            <person name="Kelso J."/>
            <person name="Kitamura H."/>
            <person name="Kitano H."/>
            <person name="Kollias G."/>
            <person name="Krishnan S.P."/>
            <person name="Kruger A."/>
            <person name="Kummerfeld S.K."/>
            <person name="Kurochkin I.V."/>
            <person name="Lareau L.F."/>
            <person name="Lazarevic D."/>
            <person name="Lipovich L."/>
            <person name="Liu J."/>
            <person name="Liuni S."/>
            <person name="McWilliam S."/>
            <person name="Madan Babu M."/>
            <person name="Madera M."/>
            <person name="Marchionni L."/>
            <person name="Matsuda H."/>
            <person name="Matsuzawa S."/>
            <person name="Miki H."/>
            <person name="Mignone F."/>
            <person name="Miyake S."/>
            <person name="Morris K."/>
            <person name="Mottagui-Tabar S."/>
            <person name="Mulder N."/>
            <person name="Nakano N."/>
            <person name="Nakauchi H."/>
            <person name="Ng P."/>
            <person name="Nilsson R."/>
            <person name="Nishiguchi S."/>
            <person name="Nishikawa S."/>
            <person name="Nori F."/>
            <person name="Ohara O."/>
            <person name="Okazaki Y."/>
            <person name="Orlando V."/>
            <person name="Pang K.C."/>
            <person name="Pavan W.J."/>
            <person name="Pavesi G."/>
            <person name="Pesole G."/>
            <person name="Petrovsky N."/>
            <person name="Piazza S."/>
            <person name="Reed J."/>
            <person name="Reid J.F."/>
            <person name="Ring B.Z."/>
            <person name="Ringwald M."/>
            <person name="Rost B."/>
            <person name="Ruan Y."/>
            <person name="Salzberg S.L."/>
            <person name="Sandelin A."/>
            <person name="Schneider C."/>
            <person name="Schoenbach C."/>
            <person name="Sekiguchi K."/>
            <person name="Semple C.A."/>
            <person name="Seno S."/>
            <person name="Sessa L."/>
            <person name="Sheng Y."/>
            <person name="Shibata Y."/>
            <person name="Shimada H."/>
            <person name="Shimada K."/>
            <person name="Silva D."/>
            <person name="Sinclair B."/>
            <person name="Sperling S."/>
            <person name="Stupka E."/>
            <person name="Sugiura K."/>
            <person name="Sultana R."/>
            <person name="Takenaka Y."/>
            <person name="Taki K."/>
            <person name="Tammoja K."/>
            <person name="Tan S.L."/>
            <person name="Tang S."/>
            <person name="Taylor M.S."/>
            <person name="Tegner J."/>
            <person name="Teichmann S.A."/>
            <person name="Ueda H.R."/>
            <person name="van Nimwegen E."/>
            <person name="Verardo R."/>
            <person name="Wei C.L."/>
            <person name="Yagi K."/>
            <person name="Yamanishi H."/>
            <person name="Zabarovsky E."/>
            <person name="Zhu S."/>
            <person name="Zimmer A."/>
            <person name="Hide W."/>
            <person name="Bult C."/>
            <person name="Grimmond S.M."/>
            <person name="Teasdale R.D."/>
            <person name="Liu E.T."/>
            <person name="Brusic V."/>
            <person name="Quackenbush J."/>
            <person name="Wahlestedt C."/>
            <person name="Mattick J.S."/>
            <person name="Hume D.A."/>
            <person name="Kai C."/>
            <person name="Sasaki D."/>
            <person name="Tomaru Y."/>
            <person name="Fukuda S."/>
            <person name="Kanamori-Katayama M."/>
            <person name="Suzuki M."/>
            <person name="Aoki J."/>
            <person name="Arakawa T."/>
            <person name="Iida J."/>
            <person name="Imamura K."/>
            <person name="Itoh M."/>
            <person name="Kato T."/>
            <person name="Kawaji H."/>
            <person name="Kawagashira N."/>
            <person name="Kawashima T."/>
            <person name="Kojima M."/>
            <person name="Kondo S."/>
            <person name="Konno H."/>
            <person name="Nakano K."/>
            <person name="Ninomiya N."/>
            <person name="Nishio T."/>
            <person name="Okada M."/>
            <person name="Plessy C."/>
            <person name="Shibata K."/>
            <person name="Shiraki T."/>
            <person name="Suzuki S."/>
            <person name="Tagami M."/>
            <person name="Waki K."/>
            <person name="Watahiki A."/>
            <person name="Okamura-Oho Y."/>
            <person name="Suzuki H."/>
            <person name="Kawai J."/>
            <person name="Hayashizaki Y."/>
        </authorList>
    </citation>
    <scope>NUCLEOTIDE SEQUENCE [LARGE SCALE MRNA] (ISOFORM 1)</scope>
    <source>
        <strain>C57BL/6J</strain>
        <tissue>Thymus</tissue>
    </source>
</reference>
<reference key="2">
    <citation type="journal article" date="2004" name="Genome Res.">
        <title>The status, quality, and expansion of the NIH full-length cDNA project: the Mammalian Gene Collection (MGC).</title>
        <authorList>
            <consortium name="The MGC Project Team"/>
        </authorList>
    </citation>
    <scope>NUCLEOTIDE SEQUENCE [LARGE SCALE MRNA] (ISOFORM 2)</scope>
    <source>
        <tissue>Testis</tissue>
    </source>
</reference>
<name>TTC24_MOUSE</name>
<keyword id="KW-0025">Alternative splicing</keyword>
<keyword id="KW-1185">Reference proteome</keyword>
<keyword id="KW-0677">Repeat</keyword>
<keyword id="KW-0802">TPR repeat</keyword>